<proteinExistence type="inferred from homology"/>
<dbReference type="EMBL" id="CP001281">
    <property type="protein sequence ID" value="ACR01494.1"/>
    <property type="molecule type" value="Genomic_DNA"/>
</dbReference>
<dbReference type="RefSeq" id="WP_004321902.1">
    <property type="nucleotide sequence ID" value="NC_011662.2"/>
</dbReference>
<dbReference type="SMR" id="C4KAR8"/>
<dbReference type="STRING" id="85643.Tmz1t_2895"/>
<dbReference type="KEGG" id="tmz:Tmz1t_2895"/>
<dbReference type="eggNOG" id="COG5581">
    <property type="taxonomic scope" value="Bacteria"/>
</dbReference>
<dbReference type="HOGENOM" id="CLU_086025_0_0_4"/>
<dbReference type="OrthoDB" id="5572581at2"/>
<dbReference type="Proteomes" id="UP000002186">
    <property type="component" value="Chromosome"/>
</dbReference>
<dbReference type="GO" id="GO:0009425">
    <property type="term" value="C:bacterial-type flagellum basal body"/>
    <property type="evidence" value="ECO:0007669"/>
    <property type="project" value="UniProtKB-SubCell"/>
</dbReference>
<dbReference type="GO" id="GO:0035438">
    <property type="term" value="F:cyclic-di-GMP binding"/>
    <property type="evidence" value="ECO:0007669"/>
    <property type="project" value="UniProtKB-UniRule"/>
</dbReference>
<dbReference type="GO" id="GO:0071973">
    <property type="term" value="P:bacterial-type flagellum-dependent cell motility"/>
    <property type="evidence" value="ECO:0007669"/>
    <property type="project" value="UniProtKB-UniRule"/>
</dbReference>
<dbReference type="GO" id="GO:0071945">
    <property type="term" value="P:regulation of bacterial-type flagellum-dependent cell motility by regulation of motor speed"/>
    <property type="evidence" value="ECO:0007669"/>
    <property type="project" value="UniProtKB-UniRule"/>
</dbReference>
<dbReference type="Gene3D" id="2.30.110.10">
    <property type="entry name" value="Electron Transport, Fmn-binding Protein, Chain A"/>
    <property type="match status" value="1"/>
</dbReference>
<dbReference type="Gene3D" id="2.40.10.220">
    <property type="entry name" value="predicted glycosyltransferase like domains"/>
    <property type="match status" value="1"/>
</dbReference>
<dbReference type="HAMAP" id="MF_01457">
    <property type="entry name" value="YcgR"/>
    <property type="match status" value="1"/>
</dbReference>
<dbReference type="InterPro" id="IPR009875">
    <property type="entry name" value="PilZ_domain"/>
</dbReference>
<dbReference type="InterPro" id="IPR012349">
    <property type="entry name" value="Split_barrel_FMN-bd"/>
</dbReference>
<dbReference type="InterPro" id="IPR023787">
    <property type="entry name" value="T3SS_YcgR"/>
</dbReference>
<dbReference type="InterPro" id="IPR009926">
    <property type="entry name" value="T3SS_YcgR_PilZN"/>
</dbReference>
<dbReference type="Pfam" id="PF07238">
    <property type="entry name" value="PilZ"/>
    <property type="match status" value="1"/>
</dbReference>
<dbReference type="Pfam" id="PF07317">
    <property type="entry name" value="PilZN"/>
    <property type="match status" value="1"/>
</dbReference>
<sequence length="263" mass="28517">MAELSTPSPASPAPLDGGRGDELEKFTLRGARQILQLLQDLITHRGLITAHTGGGHSFMTAVLKVDEERGRVVLDPSPDPQANRRALAAPRLTCVTQLDGIRIQFPLVGLGEGQDKGRPALFAPLPAEMLRLQRREFYRLQVPLAHELSCLLKAEDLARKPVEVSARVIDIGAGGVAVVVPTGAAEFVIGGTLPACRLALPDGEPIELDLEVRNLNRQTQRNGTEQLRVGLRFAALPRAADTRIQRYIFKTERALNAKARGGL</sequence>
<name>YCGR_THASP</name>
<evidence type="ECO:0000255" key="1">
    <source>
        <dbReference type="HAMAP-Rule" id="MF_01457"/>
    </source>
</evidence>
<evidence type="ECO:0000256" key="2">
    <source>
        <dbReference type="SAM" id="MobiDB-lite"/>
    </source>
</evidence>
<gene>
    <name evidence="1" type="primary">ycgR</name>
    <name type="ordered locus">Tmz1t_2895</name>
</gene>
<feature type="chain" id="PRO_0000395286" description="Flagellar brake protein YcgR">
    <location>
        <begin position="1"/>
        <end position="263"/>
    </location>
</feature>
<feature type="domain" description="PilZ" evidence="1">
    <location>
        <begin position="133"/>
        <end position="250"/>
    </location>
</feature>
<feature type="region of interest" description="Disordered" evidence="2">
    <location>
        <begin position="1"/>
        <end position="21"/>
    </location>
</feature>
<comment type="function">
    <text evidence="1">Acts as a flagellar brake, regulating swimming and swarming in a bis-(3'-5') cyclic diguanylic acid (c-di-GMP)-dependent manner. Binds 1 c-di-GMP dimer per subunit. Increasing levels of c-di-GMP lead to decreased motility.</text>
</comment>
<comment type="subunit">
    <text evidence="1">Monomer. Interacts with the flagellar basal bodies.</text>
</comment>
<comment type="subcellular location">
    <subcellularLocation>
        <location evidence="1">Bacterial flagellum basal body</location>
    </subcellularLocation>
</comment>
<comment type="similarity">
    <text evidence="1">Belongs to the YcgR family.</text>
</comment>
<accession>C4KAR8</accession>
<reference key="1">
    <citation type="submission" date="2009-05" db="EMBL/GenBank/DDBJ databases">
        <title>Complete sequence of chromosome of Thauera sp. MZ1T.</title>
        <authorList>
            <consortium name="US DOE Joint Genome Institute"/>
            <person name="Lucas S."/>
            <person name="Copeland A."/>
            <person name="Lapidus A."/>
            <person name="Glavina del Rio T."/>
            <person name="Dalin E."/>
            <person name="Tice H."/>
            <person name="Bruce D."/>
            <person name="Goodwin L."/>
            <person name="Pitluck S."/>
            <person name="Sims D."/>
            <person name="Brettin T."/>
            <person name="Detter J.C."/>
            <person name="Han C."/>
            <person name="Larimer F."/>
            <person name="Land M."/>
            <person name="Hauser L."/>
            <person name="Kyrpides N."/>
            <person name="Mikhailova N."/>
            <person name="Sayler G.S."/>
        </authorList>
    </citation>
    <scope>NUCLEOTIDE SEQUENCE [LARGE SCALE GENOMIC DNA]</scope>
    <source>
        <strain>MZ1T</strain>
    </source>
</reference>
<protein>
    <recommendedName>
        <fullName evidence="1">Flagellar brake protein YcgR</fullName>
    </recommendedName>
    <alternativeName>
        <fullName evidence="1">Cyclic di-GMP binding protein YcgR</fullName>
    </alternativeName>
</protein>
<keyword id="KW-0975">Bacterial flagellum</keyword>
<keyword id="KW-0973">c-di-GMP</keyword>
<keyword id="KW-0547">Nucleotide-binding</keyword>
<keyword id="KW-1185">Reference proteome</keyword>
<organism>
    <name type="scientific">Thauera aminoaromatica</name>
    <dbReference type="NCBI Taxonomy" id="164330"/>
    <lineage>
        <taxon>Bacteria</taxon>
        <taxon>Pseudomonadati</taxon>
        <taxon>Pseudomonadota</taxon>
        <taxon>Betaproteobacteria</taxon>
        <taxon>Rhodocyclales</taxon>
        <taxon>Zoogloeaceae</taxon>
        <taxon>Thauera</taxon>
    </lineage>
</organism>